<protein>
    <recommendedName>
        <fullName evidence="1">Aspartate carbamoyltransferase catalytic subunit</fullName>
        <ecNumber evidence="1">2.1.3.2</ecNumber>
    </recommendedName>
    <alternativeName>
        <fullName evidence="1">Aspartate transcarbamylase</fullName>
        <shortName evidence="1">ATCase</shortName>
    </alternativeName>
</protein>
<proteinExistence type="inferred from homology"/>
<comment type="function">
    <text evidence="1">Catalyzes the condensation of carbamoyl phosphate and aspartate to form carbamoyl aspartate and inorganic phosphate, the committed step in the de novo pyrimidine nucleotide biosynthesis pathway.</text>
</comment>
<comment type="catalytic activity">
    <reaction evidence="1">
        <text>carbamoyl phosphate + L-aspartate = N-carbamoyl-L-aspartate + phosphate + H(+)</text>
        <dbReference type="Rhea" id="RHEA:20013"/>
        <dbReference type="ChEBI" id="CHEBI:15378"/>
        <dbReference type="ChEBI" id="CHEBI:29991"/>
        <dbReference type="ChEBI" id="CHEBI:32814"/>
        <dbReference type="ChEBI" id="CHEBI:43474"/>
        <dbReference type="ChEBI" id="CHEBI:58228"/>
        <dbReference type="EC" id="2.1.3.2"/>
    </reaction>
</comment>
<comment type="pathway">
    <text evidence="1">Pyrimidine metabolism; UMP biosynthesis via de novo pathway; (S)-dihydroorotate from bicarbonate: step 2/3.</text>
</comment>
<comment type="subunit">
    <text evidence="1">Heterododecamer (2C3:3R2) of six catalytic PyrB chains organized as two trimers (C3), and six regulatory PyrI chains organized as three dimers (R2).</text>
</comment>
<comment type="similarity">
    <text evidence="1">Belongs to the aspartate/ornithine carbamoyltransferase superfamily. ATCase family.</text>
</comment>
<evidence type="ECO:0000255" key="1">
    <source>
        <dbReference type="HAMAP-Rule" id="MF_00001"/>
    </source>
</evidence>
<gene>
    <name evidence="1" type="primary">pyrB</name>
    <name type="ordered locus">Avi_1762</name>
</gene>
<keyword id="KW-0665">Pyrimidine biosynthesis</keyword>
<keyword id="KW-1185">Reference proteome</keyword>
<keyword id="KW-0808">Transferase</keyword>
<reference key="1">
    <citation type="journal article" date="2009" name="J. Bacteriol.">
        <title>Genome sequences of three Agrobacterium biovars help elucidate the evolution of multichromosome genomes in bacteria.</title>
        <authorList>
            <person name="Slater S.C."/>
            <person name="Goldman B.S."/>
            <person name="Goodner B."/>
            <person name="Setubal J.C."/>
            <person name="Farrand S.K."/>
            <person name="Nester E.W."/>
            <person name="Burr T.J."/>
            <person name="Banta L."/>
            <person name="Dickerman A.W."/>
            <person name="Paulsen I."/>
            <person name="Otten L."/>
            <person name="Suen G."/>
            <person name="Welch R."/>
            <person name="Almeida N.F."/>
            <person name="Arnold F."/>
            <person name="Burton O.T."/>
            <person name="Du Z."/>
            <person name="Ewing A."/>
            <person name="Godsy E."/>
            <person name="Heisel S."/>
            <person name="Houmiel K.L."/>
            <person name="Jhaveri J."/>
            <person name="Lu J."/>
            <person name="Miller N.M."/>
            <person name="Norton S."/>
            <person name="Chen Q."/>
            <person name="Phoolcharoen W."/>
            <person name="Ohlin V."/>
            <person name="Ondrusek D."/>
            <person name="Pride N."/>
            <person name="Stricklin S.L."/>
            <person name="Sun J."/>
            <person name="Wheeler C."/>
            <person name="Wilson L."/>
            <person name="Zhu H."/>
            <person name="Wood D.W."/>
        </authorList>
    </citation>
    <scope>NUCLEOTIDE SEQUENCE [LARGE SCALE GENOMIC DNA]</scope>
    <source>
        <strain>ATCC BAA-846 / DSM 112012 / S4</strain>
    </source>
</reference>
<name>PYRB_ALLAM</name>
<dbReference type="EC" id="2.1.3.2" evidence="1"/>
<dbReference type="EMBL" id="CP000633">
    <property type="protein sequence ID" value="ACM36264.1"/>
    <property type="molecule type" value="Genomic_DNA"/>
</dbReference>
<dbReference type="RefSeq" id="WP_015915687.1">
    <property type="nucleotide sequence ID" value="NC_011989.1"/>
</dbReference>
<dbReference type="SMR" id="B9JVI4"/>
<dbReference type="STRING" id="311402.Avi_1762"/>
<dbReference type="KEGG" id="avi:Avi_1762"/>
<dbReference type="eggNOG" id="COG0540">
    <property type="taxonomic scope" value="Bacteria"/>
</dbReference>
<dbReference type="HOGENOM" id="CLU_043846_2_0_5"/>
<dbReference type="UniPathway" id="UPA00070">
    <property type="reaction ID" value="UER00116"/>
</dbReference>
<dbReference type="Proteomes" id="UP000001596">
    <property type="component" value="Chromosome 1"/>
</dbReference>
<dbReference type="GO" id="GO:0005829">
    <property type="term" value="C:cytosol"/>
    <property type="evidence" value="ECO:0007669"/>
    <property type="project" value="TreeGrafter"/>
</dbReference>
<dbReference type="GO" id="GO:0016597">
    <property type="term" value="F:amino acid binding"/>
    <property type="evidence" value="ECO:0007669"/>
    <property type="project" value="InterPro"/>
</dbReference>
<dbReference type="GO" id="GO:0004070">
    <property type="term" value="F:aspartate carbamoyltransferase activity"/>
    <property type="evidence" value="ECO:0007669"/>
    <property type="project" value="UniProtKB-UniRule"/>
</dbReference>
<dbReference type="GO" id="GO:0006207">
    <property type="term" value="P:'de novo' pyrimidine nucleobase biosynthetic process"/>
    <property type="evidence" value="ECO:0007669"/>
    <property type="project" value="InterPro"/>
</dbReference>
<dbReference type="GO" id="GO:0044205">
    <property type="term" value="P:'de novo' UMP biosynthetic process"/>
    <property type="evidence" value="ECO:0007669"/>
    <property type="project" value="UniProtKB-UniRule"/>
</dbReference>
<dbReference type="GO" id="GO:0006520">
    <property type="term" value="P:amino acid metabolic process"/>
    <property type="evidence" value="ECO:0007669"/>
    <property type="project" value="InterPro"/>
</dbReference>
<dbReference type="FunFam" id="3.40.50.1370:FF:000007">
    <property type="entry name" value="Aspartate carbamoyltransferase"/>
    <property type="match status" value="1"/>
</dbReference>
<dbReference type="Gene3D" id="3.40.50.1370">
    <property type="entry name" value="Aspartate/ornithine carbamoyltransferase"/>
    <property type="match status" value="2"/>
</dbReference>
<dbReference type="HAMAP" id="MF_00001">
    <property type="entry name" value="Asp_carb_tr"/>
    <property type="match status" value="1"/>
</dbReference>
<dbReference type="InterPro" id="IPR006132">
    <property type="entry name" value="Asp/Orn_carbamoyltranf_P-bd"/>
</dbReference>
<dbReference type="InterPro" id="IPR006130">
    <property type="entry name" value="Asp/Orn_carbamoylTrfase"/>
</dbReference>
<dbReference type="InterPro" id="IPR036901">
    <property type="entry name" value="Asp/Orn_carbamoylTrfase_sf"/>
</dbReference>
<dbReference type="InterPro" id="IPR002082">
    <property type="entry name" value="Asp_carbamoyltransf"/>
</dbReference>
<dbReference type="InterPro" id="IPR006131">
    <property type="entry name" value="Asp_carbamoyltransf_Asp/Orn-bd"/>
</dbReference>
<dbReference type="NCBIfam" id="TIGR00670">
    <property type="entry name" value="asp_carb_tr"/>
    <property type="match status" value="1"/>
</dbReference>
<dbReference type="NCBIfam" id="NF002032">
    <property type="entry name" value="PRK00856.1"/>
    <property type="match status" value="1"/>
</dbReference>
<dbReference type="PANTHER" id="PTHR45753:SF6">
    <property type="entry name" value="ASPARTATE CARBAMOYLTRANSFERASE"/>
    <property type="match status" value="1"/>
</dbReference>
<dbReference type="PANTHER" id="PTHR45753">
    <property type="entry name" value="ORNITHINE CARBAMOYLTRANSFERASE, MITOCHONDRIAL"/>
    <property type="match status" value="1"/>
</dbReference>
<dbReference type="Pfam" id="PF00185">
    <property type="entry name" value="OTCace"/>
    <property type="match status" value="1"/>
</dbReference>
<dbReference type="Pfam" id="PF02729">
    <property type="entry name" value="OTCace_N"/>
    <property type="match status" value="1"/>
</dbReference>
<dbReference type="PRINTS" id="PR00100">
    <property type="entry name" value="AOTCASE"/>
</dbReference>
<dbReference type="PRINTS" id="PR00101">
    <property type="entry name" value="ATCASE"/>
</dbReference>
<dbReference type="SUPFAM" id="SSF53671">
    <property type="entry name" value="Aspartate/ornithine carbamoyltransferase"/>
    <property type="match status" value="1"/>
</dbReference>
<dbReference type="PROSITE" id="PS00097">
    <property type="entry name" value="CARBAMOYLTRANSFERASE"/>
    <property type="match status" value="1"/>
</dbReference>
<feature type="chain" id="PRO_1000191897" description="Aspartate carbamoyltransferase catalytic subunit">
    <location>
        <begin position="1"/>
        <end position="318"/>
    </location>
</feature>
<feature type="binding site" evidence="1">
    <location>
        <position position="59"/>
    </location>
    <ligand>
        <name>carbamoyl phosphate</name>
        <dbReference type="ChEBI" id="CHEBI:58228"/>
    </ligand>
</feature>
<feature type="binding site" evidence="1">
    <location>
        <position position="60"/>
    </location>
    <ligand>
        <name>carbamoyl phosphate</name>
        <dbReference type="ChEBI" id="CHEBI:58228"/>
    </ligand>
</feature>
<feature type="binding site" evidence="1">
    <location>
        <position position="87"/>
    </location>
    <ligand>
        <name>L-aspartate</name>
        <dbReference type="ChEBI" id="CHEBI:29991"/>
    </ligand>
</feature>
<feature type="binding site" evidence="1">
    <location>
        <position position="109"/>
    </location>
    <ligand>
        <name>carbamoyl phosphate</name>
        <dbReference type="ChEBI" id="CHEBI:58228"/>
    </ligand>
</feature>
<feature type="binding site" evidence="1">
    <location>
        <position position="137"/>
    </location>
    <ligand>
        <name>carbamoyl phosphate</name>
        <dbReference type="ChEBI" id="CHEBI:58228"/>
    </ligand>
</feature>
<feature type="binding site" evidence="1">
    <location>
        <position position="140"/>
    </location>
    <ligand>
        <name>carbamoyl phosphate</name>
        <dbReference type="ChEBI" id="CHEBI:58228"/>
    </ligand>
</feature>
<feature type="binding site" evidence="1">
    <location>
        <position position="170"/>
    </location>
    <ligand>
        <name>L-aspartate</name>
        <dbReference type="ChEBI" id="CHEBI:29991"/>
    </ligand>
</feature>
<feature type="binding site" evidence="1">
    <location>
        <position position="224"/>
    </location>
    <ligand>
        <name>L-aspartate</name>
        <dbReference type="ChEBI" id="CHEBI:29991"/>
    </ligand>
</feature>
<feature type="binding site" evidence="1">
    <location>
        <position position="265"/>
    </location>
    <ligand>
        <name>carbamoyl phosphate</name>
        <dbReference type="ChEBI" id="CHEBI:58228"/>
    </ligand>
</feature>
<feature type="binding site" evidence="1">
    <location>
        <position position="266"/>
    </location>
    <ligand>
        <name>carbamoyl phosphate</name>
        <dbReference type="ChEBI" id="CHEBI:58228"/>
    </ligand>
</feature>
<sequence>MVFFPHRHLIGIKGLTETDITYLLDKADEAVKISRQREKKTSTLRGLTQINLFFEASTRTQSSFELAGKRLGADVMNMSVGNSSVKKGETLIDTAMTLNAMHPDVLVVRHASAGAAALLSQKVACAVINAGDGQHEHPTQALLDALTIRRAKGKLSRIIVAICGDVLHSRVARSNILLLNAMGARVRVVAPATLLPSGIADMSVEVFHDMKEGLKDADVVMMLRLQRERMAGSFVPSIREYFHFYGLDAEKLKAAKEDALVMHPGPMNRGVEIASDVADGPQSVIESQVEMGVAVRMAVMESLLISDNNGPRSEGVGA</sequence>
<organism>
    <name type="scientific">Allorhizobium ampelinum (strain ATCC BAA-846 / DSM 112012 / S4)</name>
    <name type="common">Agrobacterium vitis (strain S4)</name>
    <dbReference type="NCBI Taxonomy" id="311402"/>
    <lineage>
        <taxon>Bacteria</taxon>
        <taxon>Pseudomonadati</taxon>
        <taxon>Pseudomonadota</taxon>
        <taxon>Alphaproteobacteria</taxon>
        <taxon>Hyphomicrobiales</taxon>
        <taxon>Rhizobiaceae</taxon>
        <taxon>Rhizobium/Agrobacterium group</taxon>
        <taxon>Allorhizobium</taxon>
        <taxon>Allorhizobium ampelinum</taxon>
    </lineage>
</organism>
<accession>B9JVI4</accession>